<proteinExistence type="evidence at protein level"/>
<dbReference type="EC" id="3.6.5.5" evidence="2"/>
<dbReference type="EMBL" id="AY333988">
    <property type="protein sequence ID" value="AAR04100.1"/>
    <property type="molecule type" value="mRNA"/>
</dbReference>
<dbReference type="EMBL" id="AY660011">
    <property type="protein sequence ID" value="AAV97815.1"/>
    <property type="molecule type" value="mRNA"/>
</dbReference>
<dbReference type="EMBL" id="AY660012">
    <property type="protein sequence ID" value="AAV97816.1"/>
    <property type="molecule type" value="mRNA"/>
</dbReference>
<dbReference type="EMBL" id="AY510274">
    <property type="protein sequence ID" value="AAS79791.1"/>
    <property type="molecule type" value="mRNA"/>
</dbReference>
<dbReference type="EMBL" id="BC111071">
    <property type="protein sequence ID" value="AAI11072.1"/>
    <property type="molecule type" value="mRNA"/>
</dbReference>
<dbReference type="EMBL" id="U93197">
    <property type="protein sequence ID" value="AAB51724.1"/>
    <property type="status" value="ALT_INIT"/>
    <property type="molecule type" value="mRNA"/>
</dbReference>
<dbReference type="EMBL" id="AY683458">
    <property type="protein sequence ID" value="AAT92526.1"/>
    <property type="molecule type" value="mRNA"/>
</dbReference>
<dbReference type="RefSeq" id="NP_001420837.1">
    <molecule id="Q2TA68-3"/>
    <property type="nucleotide sequence ID" value="NM_001433908.1"/>
</dbReference>
<dbReference type="RefSeq" id="NP_598269.3">
    <molecule id="Q2TA68-1"/>
    <property type="nucleotide sequence ID" value="NM_133585.3"/>
</dbReference>
<dbReference type="RefSeq" id="XP_006248560.1">
    <property type="nucleotide sequence ID" value="XM_006248498.1"/>
</dbReference>
<dbReference type="SMR" id="Q2TA68"/>
<dbReference type="BioGRID" id="251124">
    <property type="interactions" value="4"/>
</dbReference>
<dbReference type="FunCoup" id="Q2TA68">
    <property type="interactions" value="3551"/>
</dbReference>
<dbReference type="IntAct" id="Q2TA68">
    <property type="interactions" value="4"/>
</dbReference>
<dbReference type="MINT" id="Q2TA68"/>
<dbReference type="STRING" id="10116.ENSRNOP00000002343"/>
<dbReference type="iPTMnet" id="Q2TA68"/>
<dbReference type="PhosphoSitePlus" id="Q2TA68"/>
<dbReference type="SwissPalm" id="Q2TA68"/>
<dbReference type="jPOST" id="Q2TA68"/>
<dbReference type="PaxDb" id="10116-ENSRNOP00000059078"/>
<dbReference type="Ensembl" id="ENSRNOT00000111984.1">
    <molecule id="Q2TA68-3"/>
    <property type="protein sequence ID" value="ENSRNOP00000079139.1"/>
    <property type="gene ID" value="ENSRNOG00000001717.9"/>
</dbReference>
<dbReference type="GeneID" id="171116"/>
<dbReference type="KEGG" id="rno:171116"/>
<dbReference type="UCSC" id="RGD:708423">
    <molecule id="Q2TA68-1"/>
    <property type="organism name" value="rat"/>
</dbReference>
<dbReference type="AGR" id="RGD:708423"/>
<dbReference type="CTD" id="4976"/>
<dbReference type="RGD" id="708423">
    <property type="gene designation" value="Opa1"/>
</dbReference>
<dbReference type="VEuPathDB" id="HostDB:ENSRNOG00000001717"/>
<dbReference type="eggNOG" id="KOG0447">
    <property type="taxonomic scope" value="Eukaryota"/>
</dbReference>
<dbReference type="GeneTree" id="ENSGT00550000074851"/>
<dbReference type="HOGENOM" id="CLU_012302_0_0_1"/>
<dbReference type="InParanoid" id="Q2TA68"/>
<dbReference type="Reactome" id="R-RNO-169911">
    <property type="pathway name" value="Regulation of Apoptosis"/>
</dbReference>
<dbReference type="PRO" id="PR:Q2TA68"/>
<dbReference type="Proteomes" id="UP000002494">
    <property type="component" value="Chromosome 11"/>
</dbReference>
<dbReference type="Bgee" id="ENSRNOG00000001717">
    <property type="expression patterns" value="Expressed in heart and 19 other cell types or tissues"/>
</dbReference>
<dbReference type="GO" id="GO:0005737">
    <property type="term" value="C:cytoplasm"/>
    <property type="evidence" value="ECO:0000318"/>
    <property type="project" value="GO_Central"/>
</dbReference>
<dbReference type="GO" id="GO:0030425">
    <property type="term" value="C:dendrite"/>
    <property type="evidence" value="ECO:0000250"/>
    <property type="project" value="ParkinsonsUK-UCL"/>
</dbReference>
<dbReference type="GO" id="GO:0005874">
    <property type="term" value="C:microtubule"/>
    <property type="evidence" value="ECO:0000318"/>
    <property type="project" value="GO_Central"/>
</dbReference>
<dbReference type="GO" id="GO:0030061">
    <property type="term" value="C:mitochondrial crista"/>
    <property type="evidence" value="ECO:0000250"/>
    <property type="project" value="ParkinsonsUK-UCL"/>
</dbReference>
<dbReference type="GO" id="GO:0005743">
    <property type="term" value="C:mitochondrial inner membrane"/>
    <property type="evidence" value="ECO:0000314"/>
    <property type="project" value="RGD"/>
</dbReference>
<dbReference type="GO" id="GO:0005758">
    <property type="term" value="C:mitochondrial intermembrane space"/>
    <property type="evidence" value="ECO:0000250"/>
    <property type="project" value="ParkinsonsUK-UCL"/>
</dbReference>
<dbReference type="GO" id="GO:0031966">
    <property type="term" value="C:mitochondrial membrane"/>
    <property type="evidence" value="ECO:0000318"/>
    <property type="project" value="GO_Central"/>
</dbReference>
<dbReference type="GO" id="GO:0005741">
    <property type="term" value="C:mitochondrial outer membrane"/>
    <property type="evidence" value="ECO:0000250"/>
    <property type="project" value="ParkinsonsUK-UCL"/>
</dbReference>
<dbReference type="GO" id="GO:0005739">
    <property type="term" value="C:mitochondrion"/>
    <property type="evidence" value="ECO:0000266"/>
    <property type="project" value="RGD"/>
</dbReference>
<dbReference type="GO" id="GO:1901612">
    <property type="term" value="F:cardiolipin binding"/>
    <property type="evidence" value="ECO:0000250"/>
    <property type="project" value="UniProtKB"/>
</dbReference>
<dbReference type="GO" id="GO:0005525">
    <property type="term" value="F:GTP binding"/>
    <property type="evidence" value="ECO:0007669"/>
    <property type="project" value="UniProtKB-KW"/>
</dbReference>
<dbReference type="GO" id="GO:0003924">
    <property type="term" value="F:GTPase activity"/>
    <property type="evidence" value="ECO:0000250"/>
    <property type="project" value="UniProtKB"/>
</dbReference>
<dbReference type="GO" id="GO:0140523">
    <property type="term" value="F:GTPase-dependent fusogenic activity"/>
    <property type="evidence" value="ECO:0000250"/>
    <property type="project" value="UniProtKB"/>
</dbReference>
<dbReference type="GO" id="GO:0019900">
    <property type="term" value="F:kinase binding"/>
    <property type="evidence" value="ECO:0000353"/>
    <property type="project" value="RGD"/>
</dbReference>
<dbReference type="GO" id="GO:0180020">
    <property type="term" value="F:membrane bending activity"/>
    <property type="evidence" value="ECO:0000250"/>
    <property type="project" value="UniProtKB"/>
</dbReference>
<dbReference type="GO" id="GO:0046872">
    <property type="term" value="F:metal ion binding"/>
    <property type="evidence" value="ECO:0007669"/>
    <property type="project" value="UniProtKB-KW"/>
</dbReference>
<dbReference type="GO" id="GO:0008017">
    <property type="term" value="F:microtubule binding"/>
    <property type="evidence" value="ECO:0000318"/>
    <property type="project" value="GO_Central"/>
</dbReference>
<dbReference type="GO" id="GO:0070300">
    <property type="term" value="F:phosphatidic acid binding"/>
    <property type="evidence" value="ECO:0000250"/>
    <property type="project" value="UniProtKB"/>
</dbReference>
<dbReference type="GO" id="GO:0044877">
    <property type="term" value="F:protein-containing complex binding"/>
    <property type="evidence" value="ECO:0000314"/>
    <property type="project" value="RGD"/>
</dbReference>
<dbReference type="GO" id="GO:0006915">
    <property type="term" value="P:apoptotic process"/>
    <property type="evidence" value="ECO:0007669"/>
    <property type="project" value="UniProtKB-KW"/>
</dbReference>
<dbReference type="GO" id="GO:0036444">
    <property type="term" value="P:calcium import into the mitochondrion"/>
    <property type="evidence" value="ECO:0000315"/>
    <property type="project" value="RGD"/>
</dbReference>
<dbReference type="GO" id="GO:0071333">
    <property type="term" value="P:cellular response to glucose stimulus"/>
    <property type="evidence" value="ECO:0000270"/>
    <property type="project" value="RGD"/>
</dbReference>
<dbReference type="GO" id="GO:0071456">
    <property type="term" value="P:cellular response to hypoxia"/>
    <property type="evidence" value="ECO:0000270"/>
    <property type="project" value="RGD"/>
</dbReference>
<dbReference type="GO" id="GO:1905232">
    <property type="term" value="P:cellular response to L-glutamate"/>
    <property type="evidence" value="ECO:0000270"/>
    <property type="project" value="RGD"/>
</dbReference>
<dbReference type="GO" id="GO:0090398">
    <property type="term" value="P:cellular senescence"/>
    <property type="evidence" value="ECO:0000250"/>
    <property type="project" value="ParkinsonsUK-UCL"/>
</dbReference>
<dbReference type="GO" id="GO:0090102">
    <property type="term" value="P:cochlea development"/>
    <property type="evidence" value="ECO:0000270"/>
    <property type="project" value="RGD"/>
</dbReference>
<dbReference type="GO" id="GO:0042407">
    <property type="term" value="P:cristae formation"/>
    <property type="evidence" value="ECO:0000266"/>
    <property type="project" value="RGD"/>
</dbReference>
<dbReference type="GO" id="GO:0006897">
    <property type="term" value="P:endocytosis"/>
    <property type="evidence" value="ECO:0000318"/>
    <property type="project" value="GO_Central"/>
</dbReference>
<dbReference type="GO" id="GO:0046039">
    <property type="term" value="P:GTP metabolic process"/>
    <property type="evidence" value="ECO:0000250"/>
    <property type="project" value="UniProtKB"/>
</dbReference>
<dbReference type="GO" id="GO:0007007">
    <property type="term" value="P:inner mitochondrial membrane organization"/>
    <property type="evidence" value="ECO:0000250"/>
    <property type="project" value="ParkinsonsUK-UCL"/>
</dbReference>
<dbReference type="GO" id="GO:0048312">
    <property type="term" value="P:intracellular distribution of mitochondria"/>
    <property type="evidence" value="ECO:0000315"/>
    <property type="project" value="RGD"/>
</dbReference>
<dbReference type="GO" id="GO:0097749">
    <property type="term" value="P:membrane tubulation"/>
    <property type="evidence" value="ECO:0000250"/>
    <property type="project" value="UniProtKB"/>
</dbReference>
<dbReference type="GO" id="GO:0000266">
    <property type="term" value="P:mitochondrial fission"/>
    <property type="evidence" value="ECO:0000318"/>
    <property type="project" value="GO_Central"/>
</dbReference>
<dbReference type="GO" id="GO:0008053">
    <property type="term" value="P:mitochondrial fusion"/>
    <property type="evidence" value="ECO:0000250"/>
    <property type="project" value="ParkinsonsUK-UCL"/>
</dbReference>
<dbReference type="GO" id="GO:0000002">
    <property type="term" value="P:mitochondrial genome maintenance"/>
    <property type="evidence" value="ECO:0000250"/>
    <property type="project" value="UniProtKB"/>
</dbReference>
<dbReference type="GO" id="GO:1990627">
    <property type="term" value="P:mitochondrial inner membrane fusion"/>
    <property type="evidence" value="ECO:0000250"/>
    <property type="project" value="UniProtKB"/>
</dbReference>
<dbReference type="GO" id="GO:0007005">
    <property type="term" value="P:mitochondrion organization"/>
    <property type="evidence" value="ECO:0000314"/>
    <property type="project" value="RGD"/>
</dbReference>
<dbReference type="GO" id="GO:0043066">
    <property type="term" value="P:negative regulation of apoptotic process"/>
    <property type="evidence" value="ECO:0000266"/>
    <property type="project" value="RGD"/>
</dbReference>
<dbReference type="GO" id="GO:1902236">
    <property type="term" value="P:negative regulation of endoplasmic reticulum stress-induced intrinsic apoptotic signaling pathway"/>
    <property type="evidence" value="ECO:0000250"/>
    <property type="project" value="ParkinsonsUK-UCL"/>
</dbReference>
<dbReference type="GO" id="GO:2001243">
    <property type="term" value="P:negative regulation of intrinsic apoptotic signaling pathway"/>
    <property type="evidence" value="ECO:0000266"/>
    <property type="project" value="RGD"/>
</dbReference>
<dbReference type="GO" id="GO:0090201">
    <property type="term" value="P:negative regulation of release of cytochrome c from mitochondria"/>
    <property type="evidence" value="ECO:0000250"/>
    <property type="project" value="ParkinsonsUK-UCL"/>
</dbReference>
<dbReference type="GO" id="GO:0001843">
    <property type="term" value="P:neural tube closure"/>
    <property type="evidence" value="ECO:0000266"/>
    <property type="project" value="RGD"/>
</dbReference>
<dbReference type="GO" id="GO:0016559">
    <property type="term" value="P:peroxisome fission"/>
    <property type="evidence" value="ECO:0000318"/>
    <property type="project" value="GO_Central"/>
</dbReference>
<dbReference type="GO" id="GO:1900078">
    <property type="term" value="P:positive regulation of cellular response to insulin stimulus"/>
    <property type="evidence" value="ECO:0000315"/>
    <property type="project" value="RGD"/>
</dbReference>
<dbReference type="GO" id="GO:1900006">
    <property type="term" value="P:positive regulation of dendrite development"/>
    <property type="evidence" value="ECO:0000315"/>
    <property type="project" value="RGD"/>
</dbReference>
<dbReference type="GO" id="GO:0061003">
    <property type="term" value="P:positive regulation of dendritic spine morphogenesis"/>
    <property type="evidence" value="ECO:0000315"/>
    <property type="project" value="RGD"/>
</dbReference>
<dbReference type="GO" id="GO:0046628">
    <property type="term" value="P:positive regulation of insulin receptor signaling pathway"/>
    <property type="evidence" value="ECO:0000315"/>
    <property type="project" value="RGD"/>
</dbReference>
<dbReference type="GO" id="GO:0032740">
    <property type="term" value="P:positive regulation of interleukin-17 production"/>
    <property type="evidence" value="ECO:0000250"/>
    <property type="project" value="UniProtKB"/>
</dbReference>
<dbReference type="GO" id="GO:0010636">
    <property type="term" value="P:positive regulation of mitochondrial fusion"/>
    <property type="evidence" value="ECO:0000315"/>
    <property type="project" value="RGD"/>
</dbReference>
<dbReference type="GO" id="GO:0014042">
    <property type="term" value="P:positive regulation of neuron maturation"/>
    <property type="evidence" value="ECO:0000315"/>
    <property type="project" value="RGD"/>
</dbReference>
<dbReference type="GO" id="GO:2000330">
    <property type="term" value="P:positive regulation of T-helper 17 cell lineage commitment"/>
    <property type="evidence" value="ECO:0000250"/>
    <property type="project" value="UniProtKB"/>
</dbReference>
<dbReference type="GO" id="GO:0051259">
    <property type="term" value="P:protein complex oligomerization"/>
    <property type="evidence" value="ECO:0000266"/>
    <property type="project" value="RGD"/>
</dbReference>
<dbReference type="GO" id="GO:1904643">
    <property type="term" value="P:response to curcumin"/>
    <property type="evidence" value="ECO:0000270"/>
    <property type="project" value="RGD"/>
</dbReference>
<dbReference type="GO" id="GO:0051602">
    <property type="term" value="P:response to electrical stimulus"/>
    <property type="evidence" value="ECO:0000270"/>
    <property type="project" value="RGD"/>
</dbReference>
<dbReference type="GO" id="GO:0014850">
    <property type="term" value="P:response to muscle activity"/>
    <property type="evidence" value="ECO:0000270"/>
    <property type="project" value="RGD"/>
</dbReference>
<dbReference type="GO" id="GO:0031667">
    <property type="term" value="P:response to nutrient levels"/>
    <property type="evidence" value="ECO:0000270"/>
    <property type="project" value="RGD"/>
</dbReference>
<dbReference type="GO" id="GO:0060041">
    <property type="term" value="P:retina development in camera-type eye"/>
    <property type="evidence" value="ECO:0000270"/>
    <property type="project" value="RGD"/>
</dbReference>
<dbReference type="GO" id="GO:0007601">
    <property type="term" value="P:visual perception"/>
    <property type="evidence" value="ECO:0000250"/>
    <property type="project" value="ParkinsonsUK-UCL"/>
</dbReference>
<dbReference type="CDD" id="cd08771">
    <property type="entry name" value="DLP_1"/>
    <property type="match status" value="1"/>
</dbReference>
<dbReference type="FunFam" id="3.40.50.300:FF:000171">
    <property type="entry name" value="Dynamin-like 120 kDa protein, mitochondrial"/>
    <property type="match status" value="1"/>
</dbReference>
<dbReference type="Gene3D" id="3.40.50.300">
    <property type="entry name" value="P-loop containing nucleotide triphosphate hydrolases"/>
    <property type="match status" value="1"/>
</dbReference>
<dbReference type="InterPro" id="IPR022812">
    <property type="entry name" value="Dynamin"/>
</dbReference>
<dbReference type="InterPro" id="IPR001401">
    <property type="entry name" value="Dynamin_GTPase"/>
</dbReference>
<dbReference type="InterPro" id="IPR045063">
    <property type="entry name" value="Dynamin_N"/>
</dbReference>
<dbReference type="InterPro" id="IPR030381">
    <property type="entry name" value="G_DYNAMIN_dom"/>
</dbReference>
<dbReference type="InterPro" id="IPR045817">
    <property type="entry name" value="OPA1_C"/>
</dbReference>
<dbReference type="InterPro" id="IPR027417">
    <property type="entry name" value="P-loop_NTPase"/>
</dbReference>
<dbReference type="PANTHER" id="PTHR11566">
    <property type="entry name" value="DYNAMIN"/>
    <property type="match status" value="1"/>
</dbReference>
<dbReference type="PANTHER" id="PTHR11566:SF67">
    <property type="entry name" value="DYNAMIN-LIKE 120 KDA PROTEIN, MITOCHONDRIAL"/>
    <property type="match status" value="1"/>
</dbReference>
<dbReference type="Pfam" id="PF00350">
    <property type="entry name" value="Dynamin_N"/>
    <property type="match status" value="1"/>
</dbReference>
<dbReference type="Pfam" id="PF19434">
    <property type="entry name" value="OPA1_C"/>
    <property type="match status" value="1"/>
</dbReference>
<dbReference type="PRINTS" id="PR00195">
    <property type="entry name" value="DYNAMIN"/>
</dbReference>
<dbReference type="SMART" id="SM00053">
    <property type="entry name" value="DYNc"/>
    <property type="match status" value="1"/>
</dbReference>
<dbReference type="SUPFAM" id="SSF52540">
    <property type="entry name" value="P-loop containing nucleoside triphosphate hydrolases"/>
    <property type="match status" value="1"/>
</dbReference>
<dbReference type="PROSITE" id="PS51718">
    <property type="entry name" value="G_DYNAMIN_2"/>
    <property type="match status" value="1"/>
</dbReference>
<comment type="function">
    <text evidence="2 3 7">Dynamin-related GTPase that is essential for normal mitochondrial morphology by mediating fusion of the mitochondrial inner membranes, regulating cristae morphology and maintaining respiratory chain function (PubMed:16778770). Exists in two forms: the transmembrane, long form (Dynamin-like GTPase OPA1, long form; L-OPA1), which is tethered to the inner mitochondrial membrane, and the short soluble form (Dynamin-like GTPase OPA1, short form; S-OPA1), which results from proteolytic cleavage and localizes in the intermembrane space (By similarity). Both forms (L-OPA1 and S-OPA1) cooperate to catalyze the fusion of the mitochondrial inner membrane (By similarity). The equilibrium between L-OPA1 and S-OPA1 is essential: excess levels of S-OPA1, produced by cleavage by OMA1 following loss of mitochondrial membrane potential, lead to an impaired equilibrium between L-OPA1 and S-OPA1, inhibiting mitochondrial fusion (By similarity). The balance between L-OPA1 and S-OPA1 also influences cristae shape and morphology (By similarity). Involved in remodeling cristae and the release of cytochrome c during apoptosis (By similarity). Proteolytic processing by PARL in response to intrinsic apoptotic signals may lead to disassembly of OPA1 oligomers and release of the caspase activator cytochrome C (CYCS) into the mitochondrial intermembrane space (By similarity). Acts as a regulator of T-helper Th17 cells, which are characterized by cells with fused mitochondria with tight cristae, by mediating mitochondrial membrane remodeling: OPA1 is required for interleukin-17 (IL-17) production (By similarity). Its role in mitochondrial morphology is required for mitochondrial genome maintenance (By similarity).</text>
</comment>
<comment type="function">
    <molecule>Dynamin-like GTPase OPA1, long form</molecule>
    <text evidence="1 2 3">Constitutes the transmembrane long form (L-OPA1) that plays a central role in mitochondrial inner membrane fusion and cristae morphology (By similarity). L-OPA1 and the soluble short form (S-OPA1) form higher-order helical assemblies that coordinate the fusion of mitochondrial inner membranes (By similarity). Inner membrane-anchored L-OPA1 molecules initiate membrane remodeling by recruiting soluble S-OPA1 to rapidly polymerize into a flexible cylindrical scaffold encaging the mitochondrial inner membrane (By similarity). Once at the membrane surface, the formation of S-OPA1 helices induce bilayer curvature (By similarity). OPA1 dimerization through the paddle region, which inserts into cardiolipin-containing membrane, promotes GTP hydrolysis and the helical assembly of a flexible OPA1 lattice on the membrane, which drives membrane curvature and mitochondrial fusion (By similarity). Plays a role in the maintenance and remodeling of mitochondrial cristae, some invaginations of the mitochondrial inner membrane that provide an increase in the surface area (By similarity). Probably acts by forming helical filaments at the inside of inner membrane tubes with the shape and dimensions of crista junctions (By similarity). The equilibrium between L-OPA1 and S-OPA1 influences cristae shape and morphology: increased L-OPA1 levels promote cristae stacking and elongated mitochondria, while increased S-OPA1 levels correlated with irregular cristae packing and round mitochondria shape (By similarity).</text>
</comment>
<comment type="function">
    <molecule>Dynamin-like GTPase OPA1, short form</molecule>
    <text evidence="1 2 3">Constitutes the soluble short form (S-OPA1) generated by cleavage by OMA1, which plays a central role in mitochondrial inner membrane fusion and cristae morphology (By similarity). The transmembrane long form (L-OPA1) and the S-OPA1 form higher-order helical assemblies that coordinate the fusion of mitochondrial inner membranes (By similarity). Inner membrane-anchored L-OPA1 molecules initiate membrane remodeling by recruiting soluble S-OPA1 to rapidly polymerize into a flexible cylindrical scaffold encaging the mitochondrial inner membrane (By similarity). Once at the membrane surface, the formation of S-OPA1 helices induce bilayer curvature (By similarity). OPA1 dimerization through the paddle region, which inserts into cardiolipin-containing membrane, promotes GTP hydrolysis and the helical assembly of a flexible OPA1 lattice on the membrane, which drives membrane curvature and mitochondrial fusion (By similarity). Excess levels of S-OPA1 produced by cleavage by OMA1 following stress conditions that induce loss of mitochondrial membrane potential, lead to an impaired equilibrium between L-OPA1 and S-OPA1, thereby inhibiting mitochondrial fusion (By similarity). Involved in mitochondrial safeguard in response to transient mitochondrial membrane depolarization by mediating flickering: cleavage by OMA1 leads to excess production of S-OPA1, preventing mitochondrial hyperfusion (By similarity). Plays a role in the maintenance and remodeling of mitochondrial cristae, some invaginations of the mitochondrial inner membrane that provide an increase in the surface area (By similarity). Probably acts by forming helical filaments at the inside of inner membrane tubes with the shape and dimensions of crista junctions (By similarity). The equilibrium between L-OPA1 and S-OPA1 influences cristae shape and morphology: increased L-OPA1 levels promote cristae stacking and elongated mitochondria, while increased S-OPA1 levels correlated with irregular cristae packing and round mitochondria shape (By similarity).</text>
</comment>
<comment type="function">
    <molecule>Isoform 2</molecule>
    <text evidence="2">Isoforms that contain the alternative exon 4b are required for mitochondrial genome maintenance, possibly by anchoring the mitochondrial nucleoids to the inner mitochondrial membrane.</text>
</comment>
<comment type="function">
    <molecule>Isoform 3</molecule>
    <text evidence="2">Isoforms that contain the alternative exon 4b are required for mitochondrial genome maintenance, possibly by anchoring the mitochondrial nucleoids to the inner mitochondrial membrane.</text>
</comment>
<comment type="catalytic activity">
    <reaction evidence="2">
        <text>GTP + H2O = GDP + phosphate + H(+)</text>
        <dbReference type="Rhea" id="RHEA:19669"/>
        <dbReference type="ChEBI" id="CHEBI:15377"/>
        <dbReference type="ChEBI" id="CHEBI:15378"/>
        <dbReference type="ChEBI" id="CHEBI:37565"/>
        <dbReference type="ChEBI" id="CHEBI:43474"/>
        <dbReference type="ChEBI" id="CHEBI:58189"/>
        <dbReference type="EC" id="3.6.5.5"/>
    </reaction>
</comment>
<comment type="activity regulation">
    <text evidence="2">Activated by guanine nucleotide exchange factor RCC1L.</text>
</comment>
<comment type="subunit">
    <text evidence="2">Oligomeric complex consisting of membrane-bound and soluble forms of OPA1. Interacts with RCC1L; RCC1L acts as a guanine nucleotide exchange factor (GEF) for OPA1 by exchanging bound GDP for free GTP. Interacts with CHCHD3 and IMMT; these interactions occur preferentially with soluble OPA1 forms. Interacts with PRELID1.</text>
</comment>
<comment type="subcellular location">
    <molecule>Dynamin-like GTPase OPA1, long form</molecule>
    <subcellularLocation>
        <location evidence="7">Mitochondrion inner membrane</location>
        <topology evidence="4">Single-pass membrane protein</topology>
    </subcellularLocation>
    <text evidence="2">Detected at contact sites between endoplasmic reticulum and mitochondrion membranes.</text>
</comment>
<comment type="subcellular location">
    <molecule>Dynamin-like GTPase OPA1, short form</molecule>
    <subcellularLocation>
        <location evidence="2">Mitochondrion intermembrane space</location>
    </subcellularLocation>
</comment>
<comment type="alternative products">
    <event type="alternative splicing"/>
    <isoform>
        <id>Q2TA68-1</id>
        <name evidence="8">1</name>
        <sequence type="displayed"/>
    </isoform>
    <isoform>
        <id>Q2TA68-2</id>
        <name evidence="8">2</name>
        <sequence type="described" ref="VSP_052186 VSP_052187"/>
    </isoform>
    <isoform>
        <id>Q2TA68-3</id>
        <name evidence="8">3</name>
        <name evidence="9">7</name>
        <sequence type="described" ref="VSP_052187"/>
    </isoform>
    <text evidence="10">Additional isoforms may exist.</text>
</comment>
<comment type="tissue specificity">
    <text evidence="6">Expressed in brain as well as retinal ganglion, starbust amacrine and horizontal cells of the retina. Absent from nerve fibers and photoreceptor cells of the retina.</text>
</comment>
<comment type="domain">
    <text evidence="2">The paddle region plays a major role in driving mitochondrial inner membrane fusion. It binds lipid membranes enriched in negatively charged phospholipids, such as cardiolipin, and promotes membrane tubulation. A conserved intramembrane region, named membrane insertion loop (MIL), within the paddle region inserts deeply into the bilayer, further stabilizing the interactions with cardiolipin-enriched membranes. OPA1 dimerization through the paddle domain promotes the helical assembly of a flexible OPA1 lattice on the membrane, driving mitochondrial fusion in cells.</text>
</comment>
<comment type="PTM">
    <text evidence="2 3">Cleaved by OMA1 or YME1L downstream of the transmembrane region in response to different signals to generate soluble forms. Cleaved by OMA1 at position S1 following stress conditions, generating the short soluble form (Dynamin-like GTPase OPA1, short form; S-OPA1). AFG3L2 is involved in the regulation of OMA1-dependent processing of OPA1 (By similarity). PARL-dependent proteolytic processing releases an antiapoptotic soluble form not required for mitochondrial fusion (By similarity).</text>
</comment>
<comment type="PTM">
    <molecule>Isoform 2</molecule>
    <text evidence="11">Cleavage at position S2 by YME1L is required to mediate oxidative phosphorylation (OXPHOS)-induced mitochondrial fusion. Cleavage occurs in the sequence motif Leu-Gln-Gln-Gln-Ile-Gln (LQQQIQ).</text>
</comment>
<comment type="PTM">
    <molecule>Isoform 3</molecule>
    <text evidence="11">Cleavage at position S2 by YME1L is required to mediate oxidative phosphorylation (OXPHOS)-induced mitochondrial fusion. Cleavage occurs in the sequence motif Leu-Gln-Gln-Gln-Ile-Gln (LQQQIQ).</text>
</comment>
<comment type="similarity">
    <text evidence="5">Belongs to the TRAFAC class dynamin-like GTPase superfamily. Dynamin/Fzo/YdjA family.</text>
</comment>
<comment type="sequence caution" evidence="10">
    <conflict type="erroneous initiation">
        <sequence resource="EMBL-CDS" id="AAB51724"/>
    </conflict>
</comment>
<evidence type="ECO:0000250" key="1">
    <source>
        <dbReference type="UniProtKB" id="G0SGC7"/>
    </source>
</evidence>
<evidence type="ECO:0000250" key="2">
    <source>
        <dbReference type="UniProtKB" id="O60313"/>
    </source>
</evidence>
<evidence type="ECO:0000250" key="3">
    <source>
        <dbReference type="UniProtKB" id="P58281"/>
    </source>
</evidence>
<evidence type="ECO:0000255" key="4"/>
<evidence type="ECO:0000255" key="5">
    <source>
        <dbReference type="PROSITE-ProRule" id="PRU01055"/>
    </source>
</evidence>
<evidence type="ECO:0000269" key="6">
    <source>
    </source>
</evidence>
<evidence type="ECO:0000269" key="7">
    <source>
    </source>
</evidence>
<evidence type="ECO:0000303" key="8">
    <source>
    </source>
</evidence>
<evidence type="ECO:0000303" key="9">
    <source>
    </source>
</evidence>
<evidence type="ECO:0000305" key="10"/>
<evidence type="ECO:0000305" key="11">
    <source>
    </source>
</evidence>
<evidence type="ECO:0000312" key="12">
    <source>
        <dbReference type="EMBL" id="AAB51724.1"/>
    </source>
</evidence>
<evidence type="ECO:0000312" key="13">
    <source>
        <dbReference type="EMBL" id="AAI11072.1"/>
    </source>
</evidence>
<evidence type="ECO:0000312" key="14">
    <source>
        <dbReference type="EMBL" id="AAR04100.1"/>
    </source>
</evidence>
<evidence type="ECO:0000312" key="15">
    <source>
        <dbReference type="EMBL" id="AAS79791.1"/>
    </source>
</evidence>
<evidence type="ECO:0000312" key="16">
    <source>
        <dbReference type="EMBL" id="AAT92526.1"/>
    </source>
</evidence>
<feature type="transit peptide" description="Mitochondrion" evidence="7">
    <location>
        <begin position="1"/>
        <end position="87"/>
    </location>
</feature>
<feature type="chain" id="PRO_0000257994" description="Dynamin-like GTPase OPA1, long form">
    <location>
        <begin position="88"/>
        <end position="960"/>
    </location>
</feature>
<feature type="chain" id="PRO_0000257995" description="Dynamin-like GTPase OPA1, short form" evidence="7 11">
    <location>
        <begin position="195"/>
        <end position="960"/>
    </location>
</feature>
<feature type="topological domain" description="Mitochondrial matrix" evidence="11">
    <location>
        <begin position="88"/>
        <end position="96"/>
    </location>
</feature>
<feature type="transmembrane region" description="Helical" evidence="4">
    <location>
        <begin position="97"/>
        <end position="113"/>
    </location>
</feature>
<feature type="topological domain" description="Mitochondrial intermembrane" evidence="11">
    <location>
        <begin position="114"/>
        <end position="770"/>
    </location>
</feature>
<feature type="intramembrane region" evidence="2">
    <location>
        <begin position="771"/>
        <end position="781"/>
    </location>
</feature>
<feature type="topological domain" description="Mitochondrial intermembrane" evidence="10">
    <location>
        <begin position="782"/>
        <end position="960"/>
    </location>
</feature>
<feature type="domain" description="Dynamin-type G" evidence="5">
    <location>
        <begin position="285"/>
        <end position="561"/>
    </location>
</feature>
<feature type="region of interest" description="G1 motif" evidence="5">
    <location>
        <begin position="295"/>
        <end position="302"/>
    </location>
</feature>
<feature type="region of interest" description="G2 motif" evidence="5">
    <location>
        <begin position="321"/>
        <end position="324"/>
    </location>
</feature>
<feature type="region of interest" description="G3 motif" evidence="5">
    <location>
        <begin position="398"/>
        <end position="401"/>
    </location>
</feature>
<feature type="region of interest" description="G4 motif" evidence="5">
    <location>
        <begin position="467"/>
        <end position="470"/>
    </location>
</feature>
<feature type="region of interest" description="G5 motif" evidence="5">
    <location>
        <begin position="501"/>
        <end position="504"/>
    </location>
</feature>
<feature type="region of interest" description="Stalk region" evidence="2">
    <location>
        <begin position="589"/>
        <end position="836"/>
    </location>
</feature>
<feature type="region of interest" description="Paddle region" evidence="2">
    <location>
        <begin position="736"/>
        <end position="856"/>
    </location>
</feature>
<feature type="region of interest" description="Stalk region" evidence="2">
    <location>
        <begin position="874"/>
        <end position="928"/>
    </location>
</feature>
<feature type="coiled-coil region" evidence="4">
    <location>
        <begin position="210"/>
        <end position="254"/>
    </location>
</feature>
<feature type="coiled-coil region" evidence="4">
    <location>
        <begin position="895"/>
        <end position="960"/>
    </location>
</feature>
<feature type="binding site" evidence="2">
    <location>
        <position position="298"/>
    </location>
    <ligand>
        <name>GTP</name>
        <dbReference type="ChEBI" id="CHEBI:37565"/>
    </ligand>
</feature>
<feature type="binding site" evidence="2">
    <location>
        <position position="300"/>
    </location>
    <ligand>
        <name>GTP</name>
        <dbReference type="ChEBI" id="CHEBI:37565"/>
    </ligand>
</feature>
<feature type="binding site" evidence="2">
    <location>
        <position position="301"/>
    </location>
    <ligand>
        <name>GTP</name>
        <dbReference type="ChEBI" id="CHEBI:37565"/>
    </ligand>
</feature>
<feature type="binding site" evidence="2">
    <location>
        <position position="302"/>
    </location>
    <ligand>
        <name>GTP</name>
        <dbReference type="ChEBI" id="CHEBI:37565"/>
    </ligand>
</feature>
<feature type="binding site" evidence="2">
    <location>
        <position position="302"/>
    </location>
    <ligand>
        <name>Mg(2+)</name>
        <dbReference type="ChEBI" id="CHEBI:18420"/>
    </ligand>
</feature>
<feature type="binding site" evidence="2">
    <location>
        <position position="303"/>
    </location>
    <ligand>
        <name>GTP</name>
        <dbReference type="ChEBI" id="CHEBI:37565"/>
    </ligand>
</feature>
<feature type="binding site" evidence="2">
    <location>
        <position position="317"/>
    </location>
    <ligand>
        <name>GTP</name>
        <dbReference type="ChEBI" id="CHEBI:37565"/>
    </ligand>
</feature>
<feature type="binding site" evidence="2">
    <location>
        <position position="323"/>
    </location>
    <ligand>
        <name>Mg(2+)</name>
        <dbReference type="ChEBI" id="CHEBI:18420"/>
    </ligand>
</feature>
<feature type="binding site" evidence="2">
    <location>
        <position position="398"/>
    </location>
    <ligand>
        <name>Mg(2+)</name>
        <dbReference type="ChEBI" id="CHEBI:18420"/>
    </ligand>
</feature>
<feature type="binding site" evidence="2">
    <location>
        <position position="468"/>
    </location>
    <ligand>
        <name>GTP</name>
        <dbReference type="ChEBI" id="CHEBI:37565"/>
    </ligand>
</feature>
<feature type="binding site" evidence="2">
    <location>
        <position position="470"/>
    </location>
    <ligand>
        <name>GTP</name>
        <dbReference type="ChEBI" id="CHEBI:37565"/>
    </ligand>
</feature>
<feature type="binding site" evidence="2">
    <location>
        <position position="503"/>
    </location>
    <ligand>
        <name>GTP</name>
        <dbReference type="ChEBI" id="CHEBI:37565"/>
    </ligand>
</feature>
<feature type="site" description="Cleavage at site S1" evidence="7">
    <location>
        <begin position="194"/>
        <end position="195"/>
    </location>
</feature>
<feature type="modified residue" description="N6-acetyllysine" evidence="2">
    <location>
        <position position="228"/>
    </location>
</feature>
<feature type="disulfide bond" evidence="2">
    <location>
        <begin position="856"/>
        <end position="874"/>
    </location>
</feature>
<feature type="splice variant" id="VSP_052186" description="In isoform 2." evidence="8">
    <original>S</original>
    <variation>PKLVSEVIEASEPLLLLS</variation>
    <location>
        <position position="158"/>
    </location>
</feature>
<feature type="splice variant" id="VSP_052187" description="In isoform 2 and isoform 3." evidence="8">
    <original>V</original>
    <variation>GLLGELILLQQQIQEHEEEARRAAGQYSTSYAQQKRKV</variation>
    <location>
        <position position="209"/>
    </location>
</feature>
<feature type="sequence conflict" description="In Ref. 1; AAR04100." evidence="10" ref="1">
    <original>T</original>
    <variation>S</variation>
    <location>
        <position position="187"/>
    </location>
</feature>
<feature type="sequence conflict" description="In Ref. 2; AAS79791." evidence="10" ref="2">
    <original>R</original>
    <variation>P</variation>
    <location>
        <position position="316"/>
    </location>
</feature>
<feature type="sequence conflict" description="In Ref. 6; AAT92526." evidence="10" ref="6">
    <original>E</original>
    <variation>G</variation>
    <location>
        <position position="687"/>
    </location>
</feature>
<feature type="sequence conflict" description="In Ref. 6; AAT92526." evidence="10" ref="6">
    <original>E</original>
    <variation>G</variation>
    <location>
        <position position="692"/>
    </location>
</feature>
<feature type="sequence conflict" description="In Ref. 6; AAT92526." evidence="10" ref="6">
    <original>L</original>
    <variation>P</variation>
    <location>
        <position position="730"/>
    </location>
</feature>
<feature type="short sequence motif" description="LQQQIQ motif" evidence="7">
    <location sequence="Q2TA68-2">
        <begin position="234"/>
        <end position="239"/>
    </location>
</feature>
<feature type="short sequence motif" description="LQQQIQ motif" evidence="7">
    <location sequence="Q2TA68-3">
        <begin position="217"/>
        <end position="222"/>
    </location>
</feature>
<gene>
    <name evidence="13" type="primary">Opa1</name>
</gene>
<accession>Q2TA68</accession>
<accession>O08681</accession>
<accession>Q5MPP1</accession>
<accession>Q5MPP2</accession>
<accession>Q5QJE9</accession>
<accession>Q6B435</accession>
<accession>Q6R611</accession>
<protein>
    <recommendedName>
        <fullName>Dynamin-like GTPase OPA1, mitochondrial</fullName>
        <ecNumber evidence="2">3.6.5.5</ecNumber>
    </recommendedName>
    <alternativeName>
        <fullName>Optic atrophy protein 1 homolog</fullName>
    </alternativeName>
    <component>
        <recommendedName>
            <fullName evidence="10">Dynamin-like GTPase OPA1, long form</fullName>
            <shortName evidence="2">L-OPA1</shortName>
        </recommendedName>
    </component>
    <component>
        <recommendedName>
            <fullName evidence="10">Dynamin-like GTPase OPA1, short form</fullName>
            <shortName evidence="2">S-OPA1</shortName>
        </recommendedName>
    </component>
</protein>
<sequence length="960" mass="111307">MWRAGRAALACEVCQSLVKHSSGVQRNVPLQKLHLVSRSIYRSHHPALKLQRPQLRTSFQQFSSLTNLSLHKLKLSPTKYGYQPRRNFWPARLAARLLKLRYIILGSAVGGGYTAKKTFDEWKDMIPDLSDYKWIVPDFIWEIDEYIDLEKIRKALPSSEDLANFAPDLDKIAESLSLLKDFFTAGTPGETAFRATDHGSESDKHYRKVSDKEKIDQLQEELLHTQLKYQRILERLEKENKELRKLVLQKDDKGIHHRKLKKSLIDMYSEVLDVLSDYDASYNTQDHLPRVVVVGDQSAGKTSVLEMIAQARIFPRGSGEMMTRSPVKVTLSEGPHHVALFKDSSREFDLTKEEDLAALRHEIELRMRKNVKEGCTVSPETISLNVKGPGLQRMVLVDLPGVINTVTSGMAPDTKETIFSISKAYMQNPNAIILCIQDGSVDAERSIVTDLVSQMDPHGRRTIFVLTKVDLAEKNVASPSRIQQIIEGKLFPMKALGYFAVVTGKGNSSESIEAIREYEEEFFQNSKLLKTSMLKAHQVTTRNLSLAVSDCFWKMVRESVEQQADSFKATRFNLETEWKNNYPRLRELDRNELFEKAKNEILDEVISLSQVTPKHWEEILQQSLWERVSTHVIENIYLPAAQTMNSGTFNTTVDIKLKQWTDKQLPNKAVEVAWETLQDEFSRFMTEPKGKEHDDIFDKLKEAVKEESIKRHKWNDFAEDSLRVIQHNALEDRSISDKQQWDAAIYFMEEALQGRLKDTENAIENMIGPDWKKRWIYWKNRTQEQCVHNETKNELEKMLKVNDEHPAYLASDEITTVRKNLESRGVEVDPSLIKDTWHQVYRRHFLKTALNHCNLCRRGFYYYQRHFIDSELECNDVVLFWRIQRMLAITANTLRQQLTNTEVRRLEKNVKEVLEDFAEDGEKKVKLLTGKRVQLAEDLKKVREIQEKLDAFIEALHQEK</sequence>
<reference evidence="10 14" key="1">
    <citation type="journal article" date="2004" name="Invest. Ophthalmol. Vis. Sci.">
        <title>OPA1, the disease gene for autosomal dominant optic atrophy, is specifically expressed in ganglion cells and intrinsic neurons of the retina.</title>
        <authorList>
            <person name="Pesch U.E.A."/>
            <person name="Fries J.E."/>
            <person name="Bette S."/>
            <person name="Kalbacher H."/>
            <person name="Wissinger B."/>
            <person name="Alexander C."/>
            <person name="Kohler K."/>
        </authorList>
    </citation>
    <scope>NUCLEOTIDE SEQUENCE [MRNA] (ISOFORMS 1; 2 AND 3)</scope>
    <scope>TISSUE SPECIFICITY</scope>
    <source>
        <tissue evidence="6">Retinal ganglion</tissue>
    </source>
</reference>
<reference evidence="15" key="2">
    <citation type="journal article" date="2005" name="Invest. Ophthalmol. Vis. Sci.">
        <title>Expression of the Opa1 mitochondrial protein in retinal ganglion cells: its downregulation causes aggregation of the mitochondrial network.</title>
        <authorList>
            <person name="Kamei S."/>
            <person name="Chen-Kuo-Chang M."/>
            <person name="Cazevieille C."/>
            <person name="Lenaers G."/>
            <person name="Olichon A."/>
            <person name="Belenguer P."/>
            <person name="Roussignol G."/>
            <person name="Renard N."/>
            <person name="Eybalin M."/>
            <person name="Michelin A."/>
            <person name="Delettre C."/>
            <person name="Brabet P."/>
            <person name="Hamel C.P."/>
        </authorList>
    </citation>
    <scope>NUCLEOTIDE SEQUENCE [MRNA] (ISOFORM 1)</scope>
    <source>
        <tissue evidence="15">Brain</tissue>
    </source>
</reference>
<reference evidence="13" key="3">
    <citation type="journal article" date="2004" name="Genome Res.">
        <title>The status, quality, and expansion of the NIH full-length cDNA project: the Mammalian Gene Collection (MGC).</title>
        <authorList>
            <consortium name="The MGC Project Team"/>
        </authorList>
    </citation>
    <scope>NUCLEOTIDE SEQUENCE [LARGE SCALE MRNA] (ISOFORM 1)</scope>
    <source>
        <tissue evidence="13">Liver</tissue>
    </source>
</reference>
<reference evidence="10 16" key="4">
    <citation type="submission" date="2007-04" db="UniProtKB">
        <authorList>
            <person name="Lubec G."/>
            <person name="Diao W."/>
        </authorList>
    </citation>
    <scope>PROTEIN SEQUENCE OF 302-312; 416-423; 446-460; 801-818 AND 825-834</scope>
    <scope>IDENTIFICATION BY MASS SPECTROMETRY</scope>
    <source>
        <strain>Sprague-Dawley</strain>
        <tissue>Hippocampus</tissue>
    </source>
</reference>
<reference evidence="10 12" key="5">
    <citation type="journal article" date="1996" name="Rat Genome">
        <title>A novel gene in the rat genome.</title>
        <authorList>
            <person name="Yuan X.J."/>
            <person name="Salgar S.K."/>
            <person name="Kunz H.W."/>
            <person name="Gill T.J. III"/>
        </authorList>
    </citation>
    <scope>NUCLEOTIDE SEQUENCE [MRNA] OF 556-960</scope>
    <source>
        <strain evidence="12">R21</strain>
        <tissue evidence="12">Spleen</tissue>
    </source>
</reference>
<reference evidence="10 16" key="6">
    <citation type="submission" date="2004-07" db="EMBL/GenBank/DDBJ databases">
        <title>Differential gene expression in gut during rat fetal period.</title>
        <authorList>
            <person name="Fabregas P.J."/>
            <person name="Nebot-Cegarra J."/>
            <person name="Capella G."/>
            <person name="Peinado M.A."/>
        </authorList>
    </citation>
    <scope>NUCLEOTIDE SEQUENCE [MRNA] OF 686-788</scope>
    <source>
        <strain evidence="16">OFA</strain>
        <tissue>Intestine</tissue>
    </source>
</reference>
<reference evidence="10" key="7">
    <citation type="journal article" date="2006" name="EMBO J.">
        <title>Regulation of mitochondrial morphology through proteolytic cleavage of OPA1.</title>
        <authorList>
            <person name="Ishihara N."/>
            <person name="Fujita Y."/>
            <person name="Oka T."/>
            <person name="Mihara K."/>
        </authorList>
    </citation>
    <scope>PROTEIN SEQUENCE OF N-TERMINUS</scope>
    <scope>FUNCTION</scope>
    <scope>SUBCELLULAR LOCATION</scope>
</reference>
<organism>
    <name type="scientific">Rattus norvegicus</name>
    <name type="common">Rat</name>
    <dbReference type="NCBI Taxonomy" id="10116"/>
    <lineage>
        <taxon>Eukaryota</taxon>
        <taxon>Metazoa</taxon>
        <taxon>Chordata</taxon>
        <taxon>Craniata</taxon>
        <taxon>Vertebrata</taxon>
        <taxon>Euteleostomi</taxon>
        <taxon>Mammalia</taxon>
        <taxon>Eutheria</taxon>
        <taxon>Euarchontoglires</taxon>
        <taxon>Glires</taxon>
        <taxon>Rodentia</taxon>
        <taxon>Myomorpha</taxon>
        <taxon>Muroidea</taxon>
        <taxon>Muridae</taxon>
        <taxon>Murinae</taxon>
        <taxon>Rattus</taxon>
    </lineage>
</organism>
<keyword id="KW-0007">Acetylation</keyword>
<keyword id="KW-0025">Alternative splicing</keyword>
<keyword id="KW-0053">Apoptosis</keyword>
<keyword id="KW-0175">Coiled coil</keyword>
<keyword id="KW-0903">Direct protein sequencing</keyword>
<keyword id="KW-1015">Disulfide bond</keyword>
<keyword id="KW-0342">GTP-binding</keyword>
<keyword id="KW-0378">Hydrolase</keyword>
<keyword id="KW-0446">Lipid-binding</keyword>
<keyword id="KW-0460">Magnesium</keyword>
<keyword id="KW-0472">Membrane</keyword>
<keyword id="KW-0479">Metal-binding</keyword>
<keyword id="KW-0496">Mitochondrion</keyword>
<keyword id="KW-0999">Mitochondrion inner membrane</keyword>
<keyword id="KW-0547">Nucleotide-binding</keyword>
<keyword id="KW-1185">Reference proteome</keyword>
<keyword id="KW-0809">Transit peptide</keyword>
<keyword id="KW-0812">Transmembrane</keyword>
<keyword id="KW-1133">Transmembrane helix</keyword>
<name>OPA1_RAT</name>